<dbReference type="EC" id="5.3.1.9" evidence="1"/>
<dbReference type="EMBL" id="CP000416">
    <property type="protein sequence ID" value="ABJ64415.1"/>
    <property type="molecule type" value="Genomic_DNA"/>
</dbReference>
<dbReference type="RefSeq" id="WP_011667989.1">
    <property type="nucleotide sequence ID" value="NC_008497.1"/>
</dbReference>
<dbReference type="SMR" id="Q03QV7"/>
<dbReference type="STRING" id="387344.LVIS_1312"/>
<dbReference type="KEGG" id="lbr:LVIS_1312"/>
<dbReference type="eggNOG" id="COG0166">
    <property type="taxonomic scope" value="Bacteria"/>
</dbReference>
<dbReference type="HOGENOM" id="CLU_037303_0_1_9"/>
<dbReference type="UniPathway" id="UPA00109">
    <property type="reaction ID" value="UER00181"/>
</dbReference>
<dbReference type="UniPathway" id="UPA00138"/>
<dbReference type="Proteomes" id="UP000001652">
    <property type="component" value="Chromosome"/>
</dbReference>
<dbReference type="GO" id="GO:0005829">
    <property type="term" value="C:cytosol"/>
    <property type="evidence" value="ECO:0007669"/>
    <property type="project" value="TreeGrafter"/>
</dbReference>
<dbReference type="GO" id="GO:0097367">
    <property type="term" value="F:carbohydrate derivative binding"/>
    <property type="evidence" value="ECO:0007669"/>
    <property type="project" value="InterPro"/>
</dbReference>
<dbReference type="GO" id="GO:0004347">
    <property type="term" value="F:glucose-6-phosphate isomerase activity"/>
    <property type="evidence" value="ECO:0007669"/>
    <property type="project" value="UniProtKB-UniRule"/>
</dbReference>
<dbReference type="GO" id="GO:0048029">
    <property type="term" value="F:monosaccharide binding"/>
    <property type="evidence" value="ECO:0007669"/>
    <property type="project" value="TreeGrafter"/>
</dbReference>
<dbReference type="GO" id="GO:0006094">
    <property type="term" value="P:gluconeogenesis"/>
    <property type="evidence" value="ECO:0007669"/>
    <property type="project" value="UniProtKB-UniRule"/>
</dbReference>
<dbReference type="GO" id="GO:0051156">
    <property type="term" value="P:glucose 6-phosphate metabolic process"/>
    <property type="evidence" value="ECO:0007669"/>
    <property type="project" value="TreeGrafter"/>
</dbReference>
<dbReference type="GO" id="GO:0006096">
    <property type="term" value="P:glycolytic process"/>
    <property type="evidence" value="ECO:0007669"/>
    <property type="project" value="UniProtKB-UniRule"/>
</dbReference>
<dbReference type="CDD" id="cd05015">
    <property type="entry name" value="SIS_PGI_1"/>
    <property type="match status" value="1"/>
</dbReference>
<dbReference type="CDD" id="cd05016">
    <property type="entry name" value="SIS_PGI_2"/>
    <property type="match status" value="1"/>
</dbReference>
<dbReference type="FunFam" id="3.40.50.10490:FF:000015">
    <property type="entry name" value="Glucose-6-phosphate isomerase"/>
    <property type="match status" value="1"/>
</dbReference>
<dbReference type="FunFam" id="3.40.50.10490:FF:000016">
    <property type="entry name" value="Glucose-6-phosphate isomerase"/>
    <property type="match status" value="1"/>
</dbReference>
<dbReference type="Gene3D" id="3.40.50.10490">
    <property type="entry name" value="Glucose-6-phosphate isomerase like protein, domain 1"/>
    <property type="match status" value="3"/>
</dbReference>
<dbReference type="HAMAP" id="MF_00473">
    <property type="entry name" value="G6P_isomerase"/>
    <property type="match status" value="1"/>
</dbReference>
<dbReference type="InterPro" id="IPR001672">
    <property type="entry name" value="G6P_Isomerase"/>
</dbReference>
<dbReference type="InterPro" id="IPR018189">
    <property type="entry name" value="Phosphoglucose_isomerase_CS"/>
</dbReference>
<dbReference type="InterPro" id="IPR046348">
    <property type="entry name" value="SIS_dom_sf"/>
</dbReference>
<dbReference type="InterPro" id="IPR035476">
    <property type="entry name" value="SIS_PGI_1"/>
</dbReference>
<dbReference type="InterPro" id="IPR035482">
    <property type="entry name" value="SIS_PGI_2"/>
</dbReference>
<dbReference type="NCBIfam" id="NF010697">
    <property type="entry name" value="PRK14097.1"/>
    <property type="match status" value="1"/>
</dbReference>
<dbReference type="PANTHER" id="PTHR11469">
    <property type="entry name" value="GLUCOSE-6-PHOSPHATE ISOMERASE"/>
    <property type="match status" value="1"/>
</dbReference>
<dbReference type="PANTHER" id="PTHR11469:SF1">
    <property type="entry name" value="GLUCOSE-6-PHOSPHATE ISOMERASE"/>
    <property type="match status" value="1"/>
</dbReference>
<dbReference type="Pfam" id="PF00342">
    <property type="entry name" value="PGI"/>
    <property type="match status" value="2"/>
</dbReference>
<dbReference type="PRINTS" id="PR00662">
    <property type="entry name" value="G6PISOMERASE"/>
</dbReference>
<dbReference type="SUPFAM" id="SSF53697">
    <property type="entry name" value="SIS domain"/>
    <property type="match status" value="1"/>
</dbReference>
<dbReference type="PROSITE" id="PS00765">
    <property type="entry name" value="P_GLUCOSE_ISOMERASE_1"/>
    <property type="match status" value="1"/>
</dbReference>
<dbReference type="PROSITE" id="PS00174">
    <property type="entry name" value="P_GLUCOSE_ISOMERASE_2"/>
    <property type="match status" value="1"/>
</dbReference>
<dbReference type="PROSITE" id="PS51463">
    <property type="entry name" value="P_GLUCOSE_ISOMERASE_3"/>
    <property type="match status" value="1"/>
</dbReference>
<sequence length="448" mass="49406">MAHIAFDRSKLTPFIHDNELGEMQAMVNAADAQLRQGTGAGSDFRDWLTLPKDYDKAEFARIKAAAKKIRSDSEVFIVIGIGGSYLGAKMAVDFLHDTFFNTLPAEKRQGPQVFFAGNSISPDYLHDLINLIGDRDFSVNVISKSGTTTEPSIAFRIFKDMLIKKYGEEGAKSRIYATTDKQRGALKTEADAAGYETFVIPDGVGGRYSVLTAVGLLPIAASGADIDQLMQGAADAQETYTDPDLTKNEAYQYAATRNILYRKGYTTELLENYEPRLQYFAEWWKQLTGESEGKDQKGIYPSSANFSTDLHSLGQYIQEGLRNLMETVVVVDKPQNDVTVPSAEDDLDGLKYLEGKPMSFVNQKAYEGVVLAHTDGGVPNMSVHIPDQTPYTLGYLIYFFEVAVAVSGYLNGINPFNQPGVEAYKTNMFALLGKPGFEDLGKELNARL</sequence>
<name>G6PI_LEVBA</name>
<accession>Q03QV7</accession>
<feature type="chain" id="PRO_1000013977" description="Glucose-6-phosphate isomerase">
    <location>
        <begin position="1"/>
        <end position="448"/>
    </location>
</feature>
<feature type="active site" description="Proton donor" evidence="1">
    <location>
        <position position="290"/>
    </location>
</feature>
<feature type="active site" evidence="1">
    <location>
        <position position="311"/>
    </location>
</feature>
<feature type="active site" evidence="1">
    <location>
        <position position="425"/>
    </location>
</feature>
<protein>
    <recommendedName>
        <fullName evidence="1">Glucose-6-phosphate isomerase</fullName>
        <shortName evidence="1">GPI</shortName>
        <ecNumber evidence="1">5.3.1.9</ecNumber>
    </recommendedName>
    <alternativeName>
        <fullName evidence="1">Phosphoglucose isomerase</fullName>
        <shortName evidence="1">PGI</shortName>
    </alternativeName>
    <alternativeName>
        <fullName evidence="1">Phosphohexose isomerase</fullName>
        <shortName evidence="1">PHI</shortName>
    </alternativeName>
</protein>
<evidence type="ECO:0000255" key="1">
    <source>
        <dbReference type="HAMAP-Rule" id="MF_00473"/>
    </source>
</evidence>
<proteinExistence type="inferred from homology"/>
<keyword id="KW-0963">Cytoplasm</keyword>
<keyword id="KW-0312">Gluconeogenesis</keyword>
<keyword id="KW-0324">Glycolysis</keyword>
<keyword id="KW-0413">Isomerase</keyword>
<keyword id="KW-1185">Reference proteome</keyword>
<organism>
    <name type="scientific">Levilactobacillus brevis (strain ATCC 367 / BCRC 12310 / CIP 105137 / JCM 1170 / LMG 11437 / NCIMB 947 / NCTC 947)</name>
    <name type="common">Lactobacillus brevis</name>
    <dbReference type="NCBI Taxonomy" id="387344"/>
    <lineage>
        <taxon>Bacteria</taxon>
        <taxon>Bacillati</taxon>
        <taxon>Bacillota</taxon>
        <taxon>Bacilli</taxon>
        <taxon>Lactobacillales</taxon>
        <taxon>Lactobacillaceae</taxon>
        <taxon>Levilactobacillus</taxon>
    </lineage>
</organism>
<reference key="1">
    <citation type="journal article" date="2006" name="Proc. Natl. Acad. Sci. U.S.A.">
        <title>Comparative genomics of the lactic acid bacteria.</title>
        <authorList>
            <person name="Makarova K.S."/>
            <person name="Slesarev A."/>
            <person name="Wolf Y.I."/>
            <person name="Sorokin A."/>
            <person name="Mirkin B."/>
            <person name="Koonin E.V."/>
            <person name="Pavlov A."/>
            <person name="Pavlova N."/>
            <person name="Karamychev V."/>
            <person name="Polouchine N."/>
            <person name="Shakhova V."/>
            <person name="Grigoriev I."/>
            <person name="Lou Y."/>
            <person name="Rohksar D."/>
            <person name="Lucas S."/>
            <person name="Huang K."/>
            <person name="Goodstein D.M."/>
            <person name="Hawkins T."/>
            <person name="Plengvidhya V."/>
            <person name="Welker D."/>
            <person name="Hughes J."/>
            <person name="Goh Y."/>
            <person name="Benson A."/>
            <person name="Baldwin K."/>
            <person name="Lee J.-H."/>
            <person name="Diaz-Muniz I."/>
            <person name="Dosti B."/>
            <person name="Smeianov V."/>
            <person name="Wechter W."/>
            <person name="Barabote R."/>
            <person name="Lorca G."/>
            <person name="Altermann E."/>
            <person name="Barrangou R."/>
            <person name="Ganesan B."/>
            <person name="Xie Y."/>
            <person name="Rawsthorne H."/>
            <person name="Tamir D."/>
            <person name="Parker C."/>
            <person name="Breidt F."/>
            <person name="Broadbent J.R."/>
            <person name="Hutkins R."/>
            <person name="O'Sullivan D."/>
            <person name="Steele J."/>
            <person name="Unlu G."/>
            <person name="Saier M.H. Jr."/>
            <person name="Klaenhammer T."/>
            <person name="Richardson P."/>
            <person name="Kozyavkin S."/>
            <person name="Weimer B.C."/>
            <person name="Mills D.A."/>
        </authorList>
    </citation>
    <scope>NUCLEOTIDE SEQUENCE [LARGE SCALE GENOMIC DNA]</scope>
    <source>
        <strain>ATCC 367 / BCRC 12310 / CIP 105137 / JCM 1170 / LMG 11437 / NCIMB 947 / NCTC 947</strain>
    </source>
</reference>
<gene>
    <name evidence="1" type="primary">pgi</name>
    <name type="ordered locus">LVIS_1312</name>
</gene>
<comment type="function">
    <text evidence="1">Catalyzes the reversible isomerization of glucose-6-phosphate to fructose-6-phosphate.</text>
</comment>
<comment type="catalytic activity">
    <reaction evidence="1">
        <text>alpha-D-glucose 6-phosphate = beta-D-fructose 6-phosphate</text>
        <dbReference type="Rhea" id="RHEA:11816"/>
        <dbReference type="ChEBI" id="CHEBI:57634"/>
        <dbReference type="ChEBI" id="CHEBI:58225"/>
        <dbReference type="EC" id="5.3.1.9"/>
    </reaction>
</comment>
<comment type="pathway">
    <text evidence="1">Carbohydrate biosynthesis; gluconeogenesis.</text>
</comment>
<comment type="pathway">
    <text evidence="1">Carbohydrate degradation; glycolysis; D-glyceraldehyde 3-phosphate and glycerone phosphate from D-glucose: step 2/4.</text>
</comment>
<comment type="subcellular location">
    <subcellularLocation>
        <location evidence="1">Cytoplasm</location>
    </subcellularLocation>
</comment>
<comment type="similarity">
    <text evidence="1">Belongs to the GPI family.</text>
</comment>